<gene>
    <name evidence="1" type="primary">nadE</name>
    <name type="ordered locus">Lxx12860</name>
</gene>
<dbReference type="EC" id="6.3.1.5" evidence="1"/>
<dbReference type="EMBL" id="AE016822">
    <property type="protein sequence ID" value="AAT89126.1"/>
    <property type="molecule type" value="Genomic_DNA"/>
</dbReference>
<dbReference type="RefSeq" id="WP_011186121.1">
    <property type="nucleotide sequence ID" value="NC_006087.1"/>
</dbReference>
<dbReference type="SMR" id="Q6AER9"/>
<dbReference type="STRING" id="281090.Lxx12860"/>
<dbReference type="KEGG" id="lxx:Lxx12860"/>
<dbReference type="eggNOG" id="COG0171">
    <property type="taxonomic scope" value="Bacteria"/>
</dbReference>
<dbReference type="HOGENOM" id="CLU_059327_3_0_11"/>
<dbReference type="UniPathway" id="UPA00253">
    <property type="reaction ID" value="UER00333"/>
</dbReference>
<dbReference type="Proteomes" id="UP000001306">
    <property type="component" value="Chromosome"/>
</dbReference>
<dbReference type="GO" id="GO:0005737">
    <property type="term" value="C:cytoplasm"/>
    <property type="evidence" value="ECO:0007669"/>
    <property type="project" value="InterPro"/>
</dbReference>
<dbReference type="GO" id="GO:0005524">
    <property type="term" value="F:ATP binding"/>
    <property type="evidence" value="ECO:0007669"/>
    <property type="project" value="UniProtKB-UniRule"/>
</dbReference>
<dbReference type="GO" id="GO:0004359">
    <property type="term" value="F:glutaminase activity"/>
    <property type="evidence" value="ECO:0007669"/>
    <property type="project" value="InterPro"/>
</dbReference>
<dbReference type="GO" id="GO:0046872">
    <property type="term" value="F:metal ion binding"/>
    <property type="evidence" value="ECO:0007669"/>
    <property type="project" value="UniProtKB-KW"/>
</dbReference>
<dbReference type="GO" id="GO:0003952">
    <property type="term" value="F:NAD+ synthase (glutamine-hydrolyzing) activity"/>
    <property type="evidence" value="ECO:0007669"/>
    <property type="project" value="InterPro"/>
</dbReference>
<dbReference type="GO" id="GO:0008795">
    <property type="term" value="F:NAD+ synthase activity"/>
    <property type="evidence" value="ECO:0007669"/>
    <property type="project" value="UniProtKB-UniRule"/>
</dbReference>
<dbReference type="GO" id="GO:0009435">
    <property type="term" value="P:NAD biosynthetic process"/>
    <property type="evidence" value="ECO:0007669"/>
    <property type="project" value="UniProtKB-UniRule"/>
</dbReference>
<dbReference type="CDD" id="cd00553">
    <property type="entry name" value="NAD_synthase"/>
    <property type="match status" value="1"/>
</dbReference>
<dbReference type="FunFam" id="3.40.50.620:FF:000015">
    <property type="entry name" value="NH(3)-dependent NAD(+) synthetase"/>
    <property type="match status" value="1"/>
</dbReference>
<dbReference type="Gene3D" id="3.40.50.620">
    <property type="entry name" value="HUPs"/>
    <property type="match status" value="1"/>
</dbReference>
<dbReference type="HAMAP" id="MF_00193">
    <property type="entry name" value="NadE_ammonia_dep"/>
    <property type="match status" value="1"/>
</dbReference>
<dbReference type="InterPro" id="IPR022310">
    <property type="entry name" value="NAD/GMP_synthase"/>
</dbReference>
<dbReference type="InterPro" id="IPR003694">
    <property type="entry name" value="NAD_synthase"/>
</dbReference>
<dbReference type="InterPro" id="IPR022926">
    <property type="entry name" value="NH(3)-dep_NAD(+)_synth"/>
</dbReference>
<dbReference type="InterPro" id="IPR014729">
    <property type="entry name" value="Rossmann-like_a/b/a_fold"/>
</dbReference>
<dbReference type="NCBIfam" id="TIGR00552">
    <property type="entry name" value="nadE"/>
    <property type="match status" value="1"/>
</dbReference>
<dbReference type="NCBIfam" id="NF001979">
    <property type="entry name" value="PRK00768.1"/>
    <property type="match status" value="1"/>
</dbReference>
<dbReference type="PANTHER" id="PTHR23090">
    <property type="entry name" value="NH 3 /GLUTAMINE-DEPENDENT NAD + SYNTHETASE"/>
    <property type="match status" value="1"/>
</dbReference>
<dbReference type="PANTHER" id="PTHR23090:SF7">
    <property type="entry name" value="NH(3)-DEPENDENT NAD(+) SYNTHETASE"/>
    <property type="match status" value="1"/>
</dbReference>
<dbReference type="Pfam" id="PF02540">
    <property type="entry name" value="NAD_synthase"/>
    <property type="match status" value="1"/>
</dbReference>
<dbReference type="SUPFAM" id="SSF52402">
    <property type="entry name" value="Adenine nucleotide alpha hydrolases-like"/>
    <property type="match status" value="1"/>
</dbReference>
<proteinExistence type="inferred from homology"/>
<protein>
    <recommendedName>
        <fullName evidence="1">NH(3)-dependent NAD(+) synthetase</fullName>
        <ecNumber evidence="1">6.3.1.5</ecNumber>
    </recommendedName>
</protein>
<name>NADE_LEIXX</name>
<evidence type="ECO:0000255" key="1">
    <source>
        <dbReference type="HAMAP-Rule" id="MF_00193"/>
    </source>
</evidence>
<keyword id="KW-0067">ATP-binding</keyword>
<keyword id="KW-0436">Ligase</keyword>
<keyword id="KW-0460">Magnesium</keyword>
<keyword id="KW-0479">Metal-binding</keyword>
<keyword id="KW-0520">NAD</keyword>
<keyword id="KW-0547">Nucleotide-binding</keyword>
<keyword id="KW-1185">Reference proteome</keyword>
<feature type="chain" id="PRO_0000152176" description="NH(3)-dependent NAD(+) synthetase">
    <location>
        <begin position="1"/>
        <end position="279"/>
    </location>
</feature>
<feature type="binding site" evidence="1">
    <location>
        <begin position="46"/>
        <end position="53"/>
    </location>
    <ligand>
        <name>ATP</name>
        <dbReference type="ChEBI" id="CHEBI:30616"/>
    </ligand>
</feature>
<feature type="binding site" evidence="1">
    <location>
        <position position="52"/>
    </location>
    <ligand>
        <name>Mg(2+)</name>
        <dbReference type="ChEBI" id="CHEBI:18420"/>
    </ligand>
</feature>
<feature type="binding site" evidence="1">
    <location>
        <position position="139"/>
    </location>
    <ligand>
        <name>deamido-NAD(+)</name>
        <dbReference type="ChEBI" id="CHEBI:58437"/>
    </ligand>
</feature>
<feature type="binding site" evidence="1">
    <location>
        <position position="159"/>
    </location>
    <ligand>
        <name>ATP</name>
        <dbReference type="ChEBI" id="CHEBI:30616"/>
    </ligand>
</feature>
<feature type="binding site" evidence="1">
    <location>
        <position position="164"/>
    </location>
    <ligand>
        <name>Mg(2+)</name>
        <dbReference type="ChEBI" id="CHEBI:18420"/>
    </ligand>
</feature>
<feature type="binding site" evidence="1">
    <location>
        <position position="172"/>
    </location>
    <ligand>
        <name>deamido-NAD(+)</name>
        <dbReference type="ChEBI" id="CHEBI:58437"/>
    </ligand>
</feature>
<feature type="binding site" evidence="1">
    <location>
        <position position="179"/>
    </location>
    <ligand>
        <name>deamido-NAD(+)</name>
        <dbReference type="ChEBI" id="CHEBI:58437"/>
    </ligand>
</feature>
<feature type="binding site" evidence="1">
    <location>
        <position position="188"/>
    </location>
    <ligand>
        <name>ATP</name>
        <dbReference type="ChEBI" id="CHEBI:30616"/>
    </ligand>
</feature>
<feature type="binding site" evidence="1">
    <location>
        <position position="210"/>
    </location>
    <ligand>
        <name>ATP</name>
        <dbReference type="ChEBI" id="CHEBI:30616"/>
    </ligand>
</feature>
<feature type="binding site" evidence="1">
    <location>
        <begin position="259"/>
        <end position="260"/>
    </location>
    <ligand>
        <name>deamido-NAD(+)</name>
        <dbReference type="ChEBI" id="CHEBI:58437"/>
    </ligand>
</feature>
<accession>Q6AER9</accession>
<sequence>MRDLQARIIHELNVRATIDPAAEVVERVDFLVRYVRAAGASGFVLGVSGGQDSSLAGRLCQLAVERLAEQGVAAEFIAVRLPYAVQNDEDDAQLALSFIRPERTVAVNIQRGVEGVGNEYRDALGEDMTDFAKGNVKARVRMVAQYAIAGQRRLLVVGTDHAAEAVTGFYTKYGDGGADLLPLSGLSKRQGRALLQHLGAPARLYEKAPTADLLDQSPGQTDEANLGLRYSDIDDFLEGKDVAEKVAIAIEARYLATEHKRRVPASMFDDWWTGGGFGR</sequence>
<organism>
    <name type="scientific">Leifsonia xyli subsp. xyli (strain CTCB07)</name>
    <dbReference type="NCBI Taxonomy" id="281090"/>
    <lineage>
        <taxon>Bacteria</taxon>
        <taxon>Bacillati</taxon>
        <taxon>Actinomycetota</taxon>
        <taxon>Actinomycetes</taxon>
        <taxon>Micrococcales</taxon>
        <taxon>Microbacteriaceae</taxon>
        <taxon>Leifsonia</taxon>
    </lineage>
</organism>
<reference key="1">
    <citation type="journal article" date="2004" name="Mol. Plant Microbe Interact.">
        <title>The genome sequence of the Gram-positive sugarcane pathogen Leifsonia xyli subsp. xyli.</title>
        <authorList>
            <person name="Monteiro-Vitorello C.B."/>
            <person name="Camargo L.E.A."/>
            <person name="Van Sluys M.A."/>
            <person name="Kitajima J.P."/>
            <person name="Truffi D."/>
            <person name="do Amaral A.M."/>
            <person name="Harakava R."/>
            <person name="de Oliveira J.C.F."/>
            <person name="Wood D."/>
            <person name="de Oliveira M.C."/>
            <person name="Miyaki C.Y."/>
            <person name="Takita M.A."/>
            <person name="da Silva A.C.R."/>
            <person name="Furlan L.R."/>
            <person name="Carraro D.M."/>
            <person name="Camarotte G."/>
            <person name="Almeida N.F. Jr."/>
            <person name="Carrer H."/>
            <person name="Coutinho L.L."/>
            <person name="El-Dorry H.A."/>
            <person name="Ferro M.I.T."/>
            <person name="Gagliardi P.R."/>
            <person name="Giglioti E."/>
            <person name="Goldman M.H.S."/>
            <person name="Goldman G.H."/>
            <person name="Kimura E.T."/>
            <person name="Ferro E.S."/>
            <person name="Kuramae E.E."/>
            <person name="Lemos E.G.M."/>
            <person name="Lemos M.V.F."/>
            <person name="Mauro S.M.Z."/>
            <person name="Machado M.A."/>
            <person name="Marino C.L."/>
            <person name="Menck C.F."/>
            <person name="Nunes L.R."/>
            <person name="Oliveira R.C."/>
            <person name="Pereira G.G."/>
            <person name="Siqueira W."/>
            <person name="de Souza A.A."/>
            <person name="Tsai S.M."/>
            <person name="Zanca A.S."/>
            <person name="Simpson A.J.G."/>
            <person name="Brumbley S.M."/>
            <person name="Setubal J.C."/>
        </authorList>
    </citation>
    <scope>NUCLEOTIDE SEQUENCE [LARGE SCALE GENOMIC DNA]</scope>
    <source>
        <strain>CTCB07</strain>
    </source>
</reference>
<comment type="function">
    <text evidence="1">Catalyzes the ATP-dependent amidation of deamido-NAD to form NAD. Uses ammonia as a nitrogen source.</text>
</comment>
<comment type="catalytic activity">
    <reaction evidence="1">
        <text>deamido-NAD(+) + NH4(+) + ATP = AMP + diphosphate + NAD(+) + H(+)</text>
        <dbReference type="Rhea" id="RHEA:21188"/>
        <dbReference type="ChEBI" id="CHEBI:15378"/>
        <dbReference type="ChEBI" id="CHEBI:28938"/>
        <dbReference type="ChEBI" id="CHEBI:30616"/>
        <dbReference type="ChEBI" id="CHEBI:33019"/>
        <dbReference type="ChEBI" id="CHEBI:57540"/>
        <dbReference type="ChEBI" id="CHEBI:58437"/>
        <dbReference type="ChEBI" id="CHEBI:456215"/>
        <dbReference type="EC" id="6.3.1.5"/>
    </reaction>
</comment>
<comment type="pathway">
    <text evidence="1">Cofactor biosynthesis; NAD(+) biosynthesis; NAD(+) from deamido-NAD(+) (ammonia route): step 1/1.</text>
</comment>
<comment type="subunit">
    <text evidence="1">Homodimer.</text>
</comment>
<comment type="similarity">
    <text evidence="1">Belongs to the NAD synthetase family.</text>
</comment>